<sequence>MKNINPTQTSAWQALQKHYDEMKDVTIAELFANDSDRFAKFSATFDDLMLVDFSKNRITEETLAKLQDLAKETDLAGAIKSMFSGEKINRTEDRAVLHVALRNRSNTPIIVDGKDVMPEVNAVLEKMKTFSQAIISGQWKGYTGKAITDVVNIGIGGSDLGPFMVTEALRPYKNHLNMHFVSNVDGTHIAEVLKKVNPETTLFLVASKTFTTQETMTNAHSARDWFLKTAGDEKHVAKHFAALSTNAKAVGEFGIDTANMFEFWDWVGGRYSLWSAIGLSIILSVGFDNFVELLSGAHAMDKHFSTTPAEKNLPILLALIGIWYNNFFGAETEAILPYDQYMHRFAAYFQQGNMESNGKYVDRNGNAVDYQTGPIIWGEPGTNGQHAFYQLIHQGTKMVPCDFIAPAITHNPLSDHHQKLLSNFFAQTEALAFGKSREVVEQEYRDQGKDPAQLEHVVPFKVFEGNRPTNSILLREITPFSLGALIALYEHKIFTQGAILNIFTFDQWGVELGKQLANRILPELGDDKAISSHDSSTNGLINRYKAWRA</sequence>
<keyword id="KW-0963">Cytoplasm</keyword>
<keyword id="KW-0312">Gluconeogenesis</keyword>
<keyword id="KW-0324">Glycolysis</keyword>
<keyword id="KW-0413">Isomerase</keyword>
<proteinExistence type="inferred from homology"/>
<accession>B5F1P0</accession>
<organism>
    <name type="scientific">Salmonella agona (strain SL483)</name>
    <dbReference type="NCBI Taxonomy" id="454166"/>
    <lineage>
        <taxon>Bacteria</taxon>
        <taxon>Pseudomonadati</taxon>
        <taxon>Pseudomonadota</taxon>
        <taxon>Gammaproteobacteria</taxon>
        <taxon>Enterobacterales</taxon>
        <taxon>Enterobacteriaceae</taxon>
        <taxon>Salmonella</taxon>
    </lineage>
</organism>
<name>G6PI_SALA4</name>
<reference key="1">
    <citation type="journal article" date="2011" name="J. Bacteriol.">
        <title>Comparative genomics of 28 Salmonella enterica isolates: evidence for CRISPR-mediated adaptive sublineage evolution.</title>
        <authorList>
            <person name="Fricke W.F."/>
            <person name="Mammel M.K."/>
            <person name="McDermott P.F."/>
            <person name="Tartera C."/>
            <person name="White D.G."/>
            <person name="Leclerc J.E."/>
            <person name="Ravel J."/>
            <person name="Cebula T.A."/>
        </authorList>
    </citation>
    <scope>NUCLEOTIDE SEQUENCE [LARGE SCALE GENOMIC DNA]</scope>
    <source>
        <strain>SL483</strain>
    </source>
</reference>
<protein>
    <recommendedName>
        <fullName evidence="1">Glucose-6-phosphate isomerase</fullName>
        <shortName evidence="1">GPI</shortName>
        <ecNumber evidence="1">5.3.1.9</ecNumber>
    </recommendedName>
    <alternativeName>
        <fullName evidence="1">Phosphoglucose isomerase</fullName>
        <shortName evidence="1">PGI</shortName>
    </alternativeName>
    <alternativeName>
        <fullName evidence="1">Phosphohexose isomerase</fullName>
        <shortName evidence="1">PHI</shortName>
    </alternativeName>
</protein>
<gene>
    <name evidence="1" type="primary">pgi</name>
    <name type="ordered locus">SeAg_B4478</name>
</gene>
<evidence type="ECO:0000255" key="1">
    <source>
        <dbReference type="HAMAP-Rule" id="MF_00473"/>
    </source>
</evidence>
<dbReference type="EC" id="5.3.1.9" evidence="1"/>
<dbReference type="EMBL" id="CP001138">
    <property type="protein sequence ID" value="ACH51731.1"/>
    <property type="molecule type" value="Genomic_DNA"/>
</dbReference>
<dbReference type="RefSeq" id="WP_000790027.1">
    <property type="nucleotide sequence ID" value="NC_011149.1"/>
</dbReference>
<dbReference type="SMR" id="B5F1P0"/>
<dbReference type="KEGG" id="sea:SeAg_B4478"/>
<dbReference type="HOGENOM" id="CLU_017947_3_1_6"/>
<dbReference type="UniPathway" id="UPA00109">
    <property type="reaction ID" value="UER00181"/>
</dbReference>
<dbReference type="UniPathway" id="UPA00138"/>
<dbReference type="Proteomes" id="UP000008819">
    <property type="component" value="Chromosome"/>
</dbReference>
<dbReference type="GO" id="GO:0005829">
    <property type="term" value="C:cytosol"/>
    <property type="evidence" value="ECO:0007669"/>
    <property type="project" value="TreeGrafter"/>
</dbReference>
<dbReference type="GO" id="GO:0097367">
    <property type="term" value="F:carbohydrate derivative binding"/>
    <property type="evidence" value="ECO:0007669"/>
    <property type="project" value="InterPro"/>
</dbReference>
<dbReference type="GO" id="GO:0004347">
    <property type="term" value="F:glucose-6-phosphate isomerase activity"/>
    <property type="evidence" value="ECO:0007669"/>
    <property type="project" value="UniProtKB-UniRule"/>
</dbReference>
<dbReference type="GO" id="GO:0048029">
    <property type="term" value="F:monosaccharide binding"/>
    <property type="evidence" value="ECO:0007669"/>
    <property type="project" value="TreeGrafter"/>
</dbReference>
<dbReference type="GO" id="GO:0006094">
    <property type="term" value="P:gluconeogenesis"/>
    <property type="evidence" value="ECO:0007669"/>
    <property type="project" value="UniProtKB-UniRule"/>
</dbReference>
<dbReference type="GO" id="GO:0051156">
    <property type="term" value="P:glucose 6-phosphate metabolic process"/>
    <property type="evidence" value="ECO:0007669"/>
    <property type="project" value="TreeGrafter"/>
</dbReference>
<dbReference type="GO" id="GO:0006096">
    <property type="term" value="P:glycolytic process"/>
    <property type="evidence" value="ECO:0007669"/>
    <property type="project" value="UniProtKB-UniRule"/>
</dbReference>
<dbReference type="CDD" id="cd05015">
    <property type="entry name" value="SIS_PGI_1"/>
    <property type="match status" value="1"/>
</dbReference>
<dbReference type="CDD" id="cd05016">
    <property type="entry name" value="SIS_PGI_2"/>
    <property type="match status" value="1"/>
</dbReference>
<dbReference type="FunFam" id="1.10.1390.10:FF:000001">
    <property type="entry name" value="Glucose-6-phosphate isomerase"/>
    <property type="match status" value="1"/>
</dbReference>
<dbReference type="FunFam" id="3.40.50.10490:FF:000004">
    <property type="entry name" value="Glucose-6-phosphate isomerase"/>
    <property type="match status" value="1"/>
</dbReference>
<dbReference type="Gene3D" id="1.10.1390.10">
    <property type="match status" value="1"/>
</dbReference>
<dbReference type="Gene3D" id="3.40.50.10490">
    <property type="entry name" value="Glucose-6-phosphate isomerase like protein, domain 1"/>
    <property type="match status" value="2"/>
</dbReference>
<dbReference type="HAMAP" id="MF_00473">
    <property type="entry name" value="G6P_isomerase"/>
    <property type="match status" value="1"/>
</dbReference>
<dbReference type="InterPro" id="IPR001672">
    <property type="entry name" value="G6P_Isomerase"/>
</dbReference>
<dbReference type="InterPro" id="IPR023096">
    <property type="entry name" value="G6P_Isomerase_C"/>
</dbReference>
<dbReference type="InterPro" id="IPR018189">
    <property type="entry name" value="Phosphoglucose_isomerase_CS"/>
</dbReference>
<dbReference type="InterPro" id="IPR046348">
    <property type="entry name" value="SIS_dom_sf"/>
</dbReference>
<dbReference type="InterPro" id="IPR035476">
    <property type="entry name" value="SIS_PGI_1"/>
</dbReference>
<dbReference type="InterPro" id="IPR035482">
    <property type="entry name" value="SIS_PGI_2"/>
</dbReference>
<dbReference type="NCBIfam" id="NF001211">
    <property type="entry name" value="PRK00179.1"/>
    <property type="match status" value="1"/>
</dbReference>
<dbReference type="PANTHER" id="PTHR11469">
    <property type="entry name" value="GLUCOSE-6-PHOSPHATE ISOMERASE"/>
    <property type="match status" value="1"/>
</dbReference>
<dbReference type="PANTHER" id="PTHR11469:SF1">
    <property type="entry name" value="GLUCOSE-6-PHOSPHATE ISOMERASE"/>
    <property type="match status" value="1"/>
</dbReference>
<dbReference type="Pfam" id="PF00342">
    <property type="entry name" value="PGI"/>
    <property type="match status" value="1"/>
</dbReference>
<dbReference type="PRINTS" id="PR00662">
    <property type="entry name" value="G6PISOMERASE"/>
</dbReference>
<dbReference type="SUPFAM" id="SSF53697">
    <property type="entry name" value="SIS domain"/>
    <property type="match status" value="1"/>
</dbReference>
<dbReference type="PROSITE" id="PS00765">
    <property type="entry name" value="P_GLUCOSE_ISOMERASE_1"/>
    <property type="match status" value="1"/>
</dbReference>
<dbReference type="PROSITE" id="PS00174">
    <property type="entry name" value="P_GLUCOSE_ISOMERASE_2"/>
    <property type="match status" value="1"/>
</dbReference>
<dbReference type="PROSITE" id="PS51463">
    <property type="entry name" value="P_GLUCOSE_ISOMERASE_3"/>
    <property type="match status" value="1"/>
</dbReference>
<comment type="function">
    <text evidence="1">Catalyzes the reversible isomerization of glucose-6-phosphate to fructose-6-phosphate.</text>
</comment>
<comment type="catalytic activity">
    <reaction evidence="1">
        <text>alpha-D-glucose 6-phosphate = beta-D-fructose 6-phosphate</text>
        <dbReference type="Rhea" id="RHEA:11816"/>
        <dbReference type="ChEBI" id="CHEBI:57634"/>
        <dbReference type="ChEBI" id="CHEBI:58225"/>
        <dbReference type="EC" id="5.3.1.9"/>
    </reaction>
</comment>
<comment type="pathway">
    <text evidence="1">Carbohydrate biosynthesis; gluconeogenesis.</text>
</comment>
<comment type="pathway">
    <text evidence="1">Carbohydrate degradation; glycolysis; D-glyceraldehyde 3-phosphate and glycerone phosphate from D-glucose: step 2/4.</text>
</comment>
<comment type="subcellular location">
    <subcellularLocation>
        <location evidence="1">Cytoplasm</location>
    </subcellularLocation>
</comment>
<comment type="similarity">
    <text evidence="1">Belongs to the GPI family.</text>
</comment>
<feature type="chain" id="PRO_1000125750" description="Glucose-6-phosphate isomerase">
    <location>
        <begin position="1"/>
        <end position="549"/>
    </location>
</feature>
<feature type="active site" description="Proton donor" evidence="1">
    <location>
        <position position="355"/>
    </location>
</feature>
<feature type="active site" evidence="1">
    <location>
        <position position="386"/>
    </location>
</feature>
<feature type="active site" evidence="1">
    <location>
        <position position="514"/>
    </location>
</feature>